<gene>
    <name type="primary">rps4</name>
</gene>
<organism>
    <name type="scientific">Phalaenopsis aphrodite subsp. formosana</name>
    <name type="common">Moth orchid</name>
    <dbReference type="NCBI Taxonomy" id="308872"/>
    <lineage>
        <taxon>Eukaryota</taxon>
        <taxon>Viridiplantae</taxon>
        <taxon>Streptophyta</taxon>
        <taxon>Embryophyta</taxon>
        <taxon>Tracheophyta</taxon>
        <taxon>Spermatophyta</taxon>
        <taxon>Magnoliopsida</taxon>
        <taxon>Liliopsida</taxon>
        <taxon>Asparagales</taxon>
        <taxon>Orchidaceae</taxon>
        <taxon>Epidendroideae</taxon>
        <taxon>Vandeae</taxon>
        <taxon>Aeridinae</taxon>
        <taxon>Phalaenopsis</taxon>
    </lineage>
</organism>
<comment type="function">
    <text evidence="1">One of the primary rRNA binding proteins, it binds directly to 16S rRNA where it nucleates assembly of the body of the 30S subunit.</text>
</comment>
<comment type="function">
    <text evidence="1">With S5 and S12 plays an important role in translational accuracy.</text>
</comment>
<comment type="subunit">
    <text evidence="1">Part of the 30S ribosomal subunit. Contacts protein S5. The interaction surface between S4 and S5 is involved in control of translational fidelity (By similarity).</text>
</comment>
<comment type="subcellular location">
    <subcellularLocation>
        <location>Plastid</location>
        <location>Chloroplast</location>
    </subcellularLocation>
</comment>
<comment type="similarity">
    <text evidence="2">Belongs to the universal ribosomal protein uS4 family.</text>
</comment>
<accession>Q3BAN8</accession>
<proteinExistence type="inferred from homology"/>
<dbReference type="EMBL" id="AY916449">
    <property type="protein sequence ID" value="AAW82505.1"/>
    <property type="molecule type" value="Genomic_DNA"/>
</dbReference>
<dbReference type="RefSeq" id="YP_358580.1">
    <property type="nucleotide sequence ID" value="NC_007499.1"/>
</dbReference>
<dbReference type="SMR" id="Q3BAN8"/>
<dbReference type="GeneID" id="3741679"/>
<dbReference type="GO" id="GO:0009507">
    <property type="term" value="C:chloroplast"/>
    <property type="evidence" value="ECO:0007669"/>
    <property type="project" value="UniProtKB-SubCell"/>
</dbReference>
<dbReference type="GO" id="GO:0015935">
    <property type="term" value="C:small ribosomal subunit"/>
    <property type="evidence" value="ECO:0007669"/>
    <property type="project" value="InterPro"/>
</dbReference>
<dbReference type="GO" id="GO:0019843">
    <property type="term" value="F:rRNA binding"/>
    <property type="evidence" value="ECO:0007669"/>
    <property type="project" value="UniProtKB-UniRule"/>
</dbReference>
<dbReference type="GO" id="GO:0003735">
    <property type="term" value="F:structural constituent of ribosome"/>
    <property type="evidence" value="ECO:0007669"/>
    <property type="project" value="InterPro"/>
</dbReference>
<dbReference type="GO" id="GO:0042274">
    <property type="term" value="P:ribosomal small subunit biogenesis"/>
    <property type="evidence" value="ECO:0007669"/>
    <property type="project" value="TreeGrafter"/>
</dbReference>
<dbReference type="GO" id="GO:0006412">
    <property type="term" value="P:translation"/>
    <property type="evidence" value="ECO:0007669"/>
    <property type="project" value="UniProtKB-UniRule"/>
</dbReference>
<dbReference type="CDD" id="cd00165">
    <property type="entry name" value="S4"/>
    <property type="match status" value="1"/>
</dbReference>
<dbReference type="FunFam" id="1.10.1050.10:FF:000002">
    <property type="entry name" value="30S ribosomal protein S4, chloroplastic"/>
    <property type="match status" value="1"/>
</dbReference>
<dbReference type="FunFam" id="3.10.290.10:FF:000081">
    <property type="entry name" value="30S ribosomal protein S4, chloroplastic"/>
    <property type="match status" value="1"/>
</dbReference>
<dbReference type="Gene3D" id="1.10.1050.10">
    <property type="entry name" value="Ribosomal Protein S4 Delta 41, Chain A, domain 1"/>
    <property type="match status" value="1"/>
</dbReference>
<dbReference type="Gene3D" id="3.10.290.10">
    <property type="entry name" value="RNA-binding S4 domain"/>
    <property type="match status" value="1"/>
</dbReference>
<dbReference type="HAMAP" id="MF_01306_B">
    <property type="entry name" value="Ribosomal_uS4_B"/>
    <property type="match status" value="1"/>
</dbReference>
<dbReference type="InterPro" id="IPR022801">
    <property type="entry name" value="Ribosomal_uS4"/>
</dbReference>
<dbReference type="InterPro" id="IPR005709">
    <property type="entry name" value="Ribosomal_uS4_bac-type"/>
</dbReference>
<dbReference type="InterPro" id="IPR018079">
    <property type="entry name" value="Ribosomal_uS4_CS"/>
</dbReference>
<dbReference type="InterPro" id="IPR001912">
    <property type="entry name" value="Ribosomal_uS4_N"/>
</dbReference>
<dbReference type="InterPro" id="IPR002942">
    <property type="entry name" value="S4_RNA-bd"/>
</dbReference>
<dbReference type="InterPro" id="IPR036986">
    <property type="entry name" value="S4_RNA-bd_sf"/>
</dbReference>
<dbReference type="NCBIfam" id="NF003717">
    <property type="entry name" value="PRK05327.1"/>
    <property type="match status" value="1"/>
</dbReference>
<dbReference type="NCBIfam" id="TIGR01017">
    <property type="entry name" value="rpsD_bact"/>
    <property type="match status" value="1"/>
</dbReference>
<dbReference type="PANTHER" id="PTHR11831">
    <property type="entry name" value="30S 40S RIBOSOMAL PROTEIN"/>
    <property type="match status" value="1"/>
</dbReference>
<dbReference type="PANTHER" id="PTHR11831:SF4">
    <property type="entry name" value="SMALL RIBOSOMAL SUBUNIT PROTEIN US4M"/>
    <property type="match status" value="1"/>
</dbReference>
<dbReference type="Pfam" id="PF00163">
    <property type="entry name" value="Ribosomal_S4"/>
    <property type="match status" value="1"/>
</dbReference>
<dbReference type="Pfam" id="PF01479">
    <property type="entry name" value="S4"/>
    <property type="match status" value="1"/>
</dbReference>
<dbReference type="SMART" id="SM01390">
    <property type="entry name" value="Ribosomal_S4"/>
    <property type="match status" value="1"/>
</dbReference>
<dbReference type="SMART" id="SM00363">
    <property type="entry name" value="S4"/>
    <property type="match status" value="1"/>
</dbReference>
<dbReference type="SUPFAM" id="SSF55174">
    <property type="entry name" value="Alpha-L RNA-binding motif"/>
    <property type="match status" value="1"/>
</dbReference>
<dbReference type="PROSITE" id="PS00632">
    <property type="entry name" value="RIBOSOMAL_S4"/>
    <property type="match status" value="1"/>
</dbReference>
<dbReference type="PROSITE" id="PS50889">
    <property type="entry name" value="S4"/>
    <property type="match status" value="1"/>
</dbReference>
<name>RR4_PHAAO</name>
<protein>
    <recommendedName>
        <fullName evidence="2">Small ribosomal subunit protein uS4c</fullName>
    </recommendedName>
    <alternativeName>
        <fullName>30S ribosomal protein S4, chloroplastic</fullName>
    </alternativeName>
</protein>
<evidence type="ECO:0000250" key="1"/>
<evidence type="ECO:0000305" key="2"/>
<sequence>MSRYRGPRFKKIRRLGVLPGLTSKRPRSRSDLQTQLRFGKRSQYRIRLEEKQKLRFHYGLTERQLLKYVHIAGKAKGSTGQVLLQLLEMRLDNILFRLGMASTIPGARQLVNHRHILVNGRIVDIPSYRCKPLDIITTKDKERSKALIQNYLVSSPRGELPNHLTIDSLQYKGFVNQIIDSKWIGLKINELLVVEYYSRQT</sequence>
<keyword id="KW-0150">Chloroplast</keyword>
<keyword id="KW-0934">Plastid</keyword>
<keyword id="KW-0687">Ribonucleoprotein</keyword>
<keyword id="KW-0689">Ribosomal protein</keyword>
<keyword id="KW-0694">RNA-binding</keyword>
<keyword id="KW-0699">rRNA-binding</keyword>
<feature type="chain" id="PRO_0000228953" description="Small ribosomal subunit protein uS4c">
    <location>
        <begin position="1"/>
        <end position="201"/>
    </location>
</feature>
<feature type="domain" description="S4 RNA-binding">
    <location>
        <begin position="89"/>
        <end position="150"/>
    </location>
</feature>
<reference key="1">
    <citation type="journal article" date="2006" name="Mol. Biol. Evol.">
        <title>The chloroplast genome of Phalaenopsis aphrodite (Orchidaceae): comparative analysis of evolutionary rate with that of grasses and its phylogenetic implications.</title>
        <authorList>
            <person name="Chang C.-C."/>
            <person name="Lin H.-C."/>
            <person name="Lin I.-P."/>
            <person name="Chow T.-Y."/>
            <person name="Chen H.-H."/>
            <person name="Chen W.-H."/>
            <person name="Cheng C.-H."/>
            <person name="Lin C.-Y."/>
            <person name="Liu S.-M."/>
            <person name="Chang C.-C."/>
            <person name="Chaw S.-M."/>
        </authorList>
    </citation>
    <scope>NUCLEOTIDE SEQUENCE [LARGE SCALE GENOMIC DNA]</scope>
    <source>
        <strain>cv. Taisugar TS-97</strain>
    </source>
</reference>
<geneLocation type="chloroplast"/>